<protein>
    <recommendedName>
        <fullName evidence="1">S-adenosylmethionine:tRNA ribosyltransferase-isomerase</fullName>
        <ecNumber evidence="1">2.4.99.17</ecNumber>
    </recommendedName>
    <alternativeName>
        <fullName evidence="1">Queuosine biosynthesis protein QueA</fullName>
    </alternativeName>
</protein>
<dbReference type="EC" id="2.4.99.17" evidence="1"/>
<dbReference type="EMBL" id="CP001298">
    <property type="protein sequence ID" value="ACK84131.1"/>
    <property type="molecule type" value="Genomic_DNA"/>
</dbReference>
<dbReference type="RefSeq" id="WP_015951447.1">
    <property type="nucleotide sequence ID" value="NC_011757.1"/>
</dbReference>
<dbReference type="SMR" id="B7KTS1"/>
<dbReference type="KEGG" id="mch:Mchl_3294"/>
<dbReference type="HOGENOM" id="CLU_039110_1_1_5"/>
<dbReference type="UniPathway" id="UPA00392"/>
<dbReference type="Proteomes" id="UP000002385">
    <property type="component" value="Chromosome"/>
</dbReference>
<dbReference type="GO" id="GO:0005737">
    <property type="term" value="C:cytoplasm"/>
    <property type="evidence" value="ECO:0007669"/>
    <property type="project" value="UniProtKB-SubCell"/>
</dbReference>
<dbReference type="GO" id="GO:0051075">
    <property type="term" value="F:S-adenosylmethionine:tRNA ribosyltransferase-isomerase activity"/>
    <property type="evidence" value="ECO:0007669"/>
    <property type="project" value="UniProtKB-EC"/>
</dbReference>
<dbReference type="GO" id="GO:0008616">
    <property type="term" value="P:queuosine biosynthetic process"/>
    <property type="evidence" value="ECO:0007669"/>
    <property type="project" value="UniProtKB-UniRule"/>
</dbReference>
<dbReference type="GO" id="GO:0002099">
    <property type="term" value="P:tRNA wobble guanine modification"/>
    <property type="evidence" value="ECO:0007669"/>
    <property type="project" value="TreeGrafter"/>
</dbReference>
<dbReference type="FunFam" id="3.40.1780.10:FF:000001">
    <property type="entry name" value="S-adenosylmethionine:tRNA ribosyltransferase-isomerase"/>
    <property type="match status" value="1"/>
</dbReference>
<dbReference type="Gene3D" id="2.40.10.240">
    <property type="entry name" value="QueA-like"/>
    <property type="match status" value="1"/>
</dbReference>
<dbReference type="Gene3D" id="3.40.1780.10">
    <property type="entry name" value="QueA-like"/>
    <property type="match status" value="2"/>
</dbReference>
<dbReference type="HAMAP" id="MF_00113">
    <property type="entry name" value="QueA"/>
    <property type="match status" value="1"/>
</dbReference>
<dbReference type="InterPro" id="IPR003699">
    <property type="entry name" value="QueA"/>
</dbReference>
<dbReference type="InterPro" id="IPR042118">
    <property type="entry name" value="QueA_dom1"/>
</dbReference>
<dbReference type="InterPro" id="IPR042119">
    <property type="entry name" value="QueA_dom2"/>
</dbReference>
<dbReference type="InterPro" id="IPR036100">
    <property type="entry name" value="QueA_sf"/>
</dbReference>
<dbReference type="NCBIfam" id="NF001140">
    <property type="entry name" value="PRK00147.1"/>
    <property type="match status" value="1"/>
</dbReference>
<dbReference type="NCBIfam" id="TIGR00113">
    <property type="entry name" value="queA"/>
    <property type="match status" value="1"/>
</dbReference>
<dbReference type="PANTHER" id="PTHR30307">
    <property type="entry name" value="S-ADENOSYLMETHIONINE:TRNA RIBOSYLTRANSFERASE-ISOMERASE"/>
    <property type="match status" value="1"/>
</dbReference>
<dbReference type="PANTHER" id="PTHR30307:SF0">
    <property type="entry name" value="S-ADENOSYLMETHIONINE:TRNA RIBOSYLTRANSFERASE-ISOMERASE"/>
    <property type="match status" value="1"/>
</dbReference>
<dbReference type="Pfam" id="PF02547">
    <property type="entry name" value="Queuosine_synth"/>
    <property type="match status" value="1"/>
</dbReference>
<dbReference type="SUPFAM" id="SSF111337">
    <property type="entry name" value="QueA-like"/>
    <property type="match status" value="1"/>
</dbReference>
<comment type="function">
    <text evidence="1">Transfers and isomerizes the ribose moiety from AdoMet to the 7-aminomethyl group of 7-deazaguanine (preQ1-tRNA) to give epoxyqueuosine (oQ-tRNA).</text>
</comment>
<comment type="catalytic activity">
    <reaction evidence="1">
        <text>7-aminomethyl-7-carbaguanosine(34) in tRNA + S-adenosyl-L-methionine = epoxyqueuosine(34) in tRNA + adenine + L-methionine + 2 H(+)</text>
        <dbReference type="Rhea" id="RHEA:32155"/>
        <dbReference type="Rhea" id="RHEA-COMP:10342"/>
        <dbReference type="Rhea" id="RHEA-COMP:18582"/>
        <dbReference type="ChEBI" id="CHEBI:15378"/>
        <dbReference type="ChEBI" id="CHEBI:16708"/>
        <dbReference type="ChEBI" id="CHEBI:57844"/>
        <dbReference type="ChEBI" id="CHEBI:59789"/>
        <dbReference type="ChEBI" id="CHEBI:82833"/>
        <dbReference type="ChEBI" id="CHEBI:194443"/>
        <dbReference type="EC" id="2.4.99.17"/>
    </reaction>
</comment>
<comment type="pathway">
    <text evidence="1">tRNA modification; tRNA-queuosine biosynthesis.</text>
</comment>
<comment type="subunit">
    <text evidence="1">Monomer.</text>
</comment>
<comment type="subcellular location">
    <subcellularLocation>
        <location evidence="1">Cytoplasm</location>
    </subcellularLocation>
</comment>
<comment type="similarity">
    <text evidence="1">Belongs to the QueA family.</text>
</comment>
<name>QUEA_METC4</name>
<feature type="chain" id="PRO_1000119159" description="S-adenosylmethionine:tRNA ribosyltransferase-isomerase">
    <location>
        <begin position="1"/>
        <end position="368"/>
    </location>
</feature>
<accession>B7KTS1</accession>
<sequence length="368" mass="39110">MRVDLFDFELPEAAIALRPASPRDASRLLVVRPGDPLADRGVRDLPALLSPGDALVFNDTRVIPARLSGIRHRAGGSGQRCEAMLHLREAPDRWRAFARPAKRLAPGDRIRFGSEGASEVCALSGLDATVEERGEGGEILLRFDLSGPALDEAIAGLGALPLPPYIAGKRPTDAQDTTDYQTVYAREPGAVAAPTAGLHFSDALLAGIDAAGIERVHVTLHVGAGTFLPVKADDTDAHRMHAEIGILDAATAARLNAVRARGNRVVAVGTTALRLLESAADPDGTIRPFSGATDIFITPGYRFRAVDALVTNFHLPRSTLFMLVSAFAGLDTMRAAYAHAIQSGYRFYSYGDASLLFPEGAPVSESIT</sequence>
<gene>
    <name evidence="1" type="primary">queA</name>
    <name type="ordered locus">Mchl_3294</name>
</gene>
<keyword id="KW-0963">Cytoplasm</keyword>
<keyword id="KW-0671">Queuosine biosynthesis</keyword>
<keyword id="KW-0949">S-adenosyl-L-methionine</keyword>
<keyword id="KW-0808">Transferase</keyword>
<organism>
    <name type="scientific">Methylorubrum extorquens (strain CM4 / NCIMB 13688)</name>
    <name type="common">Methylobacterium extorquens</name>
    <dbReference type="NCBI Taxonomy" id="440085"/>
    <lineage>
        <taxon>Bacteria</taxon>
        <taxon>Pseudomonadati</taxon>
        <taxon>Pseudomonadota</taxon>
        <taxon>Alphaproteobacteria</taxon>
        <taxon>Hyphomicrobiales</taxon>
        <taxon>Methylobacteriaceae</taxon>
        <taxon>Methylorubrum</taxon>
    </lineage>
</organism>
<proteinExistence type="inferred from homology"/>
<evidence type="ECO:0000255" key="1">
    <source>
        <dbReference type="HAMAP-Rule" id="MF_00113"/>
    </source>
</evidence>
<reference key="1">
    <citation type="submission" date="2008-12" db="EMBL/GenBank/DDBJ databases">
        <title>Complete sequence of chromosome of Methylobacterium chloromethanicum CM4.</title>
        <authorList>
            <consortium name="US DOE Joint Genome Institute"/>
            <person name="Lucas S."/>
            <person name="Copeland A."/>
            <person name="Lapidus A."/>
            <person name="Glavina del Rio T."/>
            <person name="Dalin E."/>
            <person name="Tice H."/>
            <person name="Bruce D."/>
            <person name="Goodwin L."/>
            <person name="Pitluck S."/>
            <person name="Chertkov O."/>
            <person name="Brettin T."/>
            <person name="Detter J.C."/>
            <person name="Han C."/>
            <person name="Larimer F."/>
            <person name="Land M."/>
            <person name="Hauser L."/>
            <person name="Kyrpides N."/>
            <person name="Mikhailova N."/>
            <person name="Marx C."/>
            <person name="Richardson P."/>
        </authorList>
    </citation>
    <scope>NUCLEOTIDE SEQUENCE [LARGE SCALE GENOMIC DNA]</scope>
    <source>
        <strain>CM4 / NCIMB 13688</strain>
    </source>
</reference>